<proteinExistence type="inferred from homology"/>
<organism>
    <name type="scientific">Methanocella arvoryzae (strain DSM 22066 / NBRC 105507 / MRE50)</name>
    <dbReference type="NCBI Taxonomy" id="351160"/>
    <lineage>
        <taxon>Archaea</taxon>
        <taxon>Methanobacteriati</taxon>
        <taxon>Methanobacteriota</taxon>
        <taxon>Stenosarchaea group</taxon>
        <taxon>Methanomicrobia</taxon>
        <taxon>Methanocellales</taxon>
        <taxon>Methanocellaceae</taxon>
        <taxon>Methanocella</taxon>
    </lineage>
</organism>
<keyword id="KW-0030">Aminoacyl-tRNA synthetase</keyword>
<keyword id="KW-0067">ATP-binding</keyword>
<keyword id="KW-0963">Cytoplasm</keyword>
<keyword id="KW-0436">Ligase</keyword>
<keyword id="KW-0479">Metal-binding</keyword>
<keyword id="KW-0547">Nucleotide-binding</keyword>
<keyword id="KW-0648">Protein biosynthesis</keyword>
<keyword id="KW-1185">Reference proteome</keyword>
<keyword id="KW-0694">RNA-binding</keyword>
<keyword id="KW-0820">tRNA-binding</keyword>
<keyword id="KW-0862">Zinc</keyword>
<reference key="1">
    <citation type="journal article" date="2006" name="Science">
        <title>Genome of rice cluster I archaea -- the key methane producers in the rice rhizosphere.</title>
        <authorList>
            <person name="Erkel C."/>
            <person name="Kube M."/>
            <person name="Reinhardt R."/>
            <person name="Liesack W."/>
        </authorList>
    </citation>
    <scope>NUCLEOTIDE SEQUENCE [LARGE SCALE GENOMIC DNA]</scope>
    <source>
        <strain>DSM 22066 / NBRC 105507 / MRE50</strain>
    </source>
</reference>
<sequence length="875" mass="99887">MDDKEIKKLMKPEFAKNYEKYYPVQTLTAMGYHRRVCKKCGRGFWTQVERDFCDEAECSGGYRFIGESLTRKKFEYKEAWDTYVKTFEQWGYVPLERYPTVCRWYEDLYFVAAGINDFQPYVVSGEIEPPARAVLEPQFCLRFNDIDNVGITGRHYTGFIMVGQHTFNTPEKHVYFKEEGIGQIQHFLTQGLGIPAHEIVFHEDVWAGGGNFGPSIEYFSRGLELGNQVYMQYEQTPDGGFKELRTKVIDMGAGLERWAWFSQGCPMSYDATFPKTMEFIYNKTGYRADPVFHAKFAKYAGILNVEEIEDVGSAWNDVAKSMEMDLGELKDMVYKIRAQYVLADHTRSLLVAIHDGALPSNVGGGYNLRNLLRRCWSLIDQYQWDIDLNDIFRSHIDEFGSWYTELKDYGSLFDIIDVERKRYEESRRKSKDIIKRMVKAKETLTADKLVELYDSQGISPELIKEAKPDVVIPEDFYARVQARHDAKATRKIEVNETQGLPKTEPMYYEKPREFKFEANVVKLLTPTKLVLDRTLFYPLGGGQAGDTGFVNGIKVKDVYKQDGVIIHVLESPMPPDTTKVIGEVDEARRRILAAHHSATHIVNYAARKVLGDHVWQAGAEKTPEKARLDITHYESLTFQQLQEIERVANDLAMKQIPVVVREMSRTEAEMEYSMRIYQGGAVPGKILRIIVIDGYDVEACGGIHVDNTSKVGFIKMLSSERIQDGVVRLEFKSLDNAVSEIQHHESILREVSDLWGVGYDDIPKTAQRFFNEWKELGKKNKELQAELVQQTIAAALGKPGDTVDVVVTGADFGTLMKAVGSFKKEFKGRTVIFRGDNFAYGYSDLINVKEKLAEGYVNVDGSEHEAKAFKAKPKA</sequence>
<comment type="function">
    <text evidence="1">Catalyzes the attachment of alanine to tRNA(Ala) in a two-step reaction: alanine is first activated by ATP to form Ala-AMP and then transferred to the acceptor end of tRNA(Ala). Also edits incorrectly charged Ser-tRNA(Ala) and Gly-tRNA(Ala) via its editing domain.</text>
</comment>
<comment type="catalytic activity">
    <reaction evidence="1">
        <text>tRNA(Ala) + L-alanine + ATP = L-alanyl-tRNA(Ala) + AMP + diphosphate</text>
        <dbReference type="Rhea" id="RHEA:12540"/>
        <dbReference type="Rhea" id="RHEA-COMP:9657"/>
        <dbReference type="Rhea" id="RHEA-COMP:9923"/>
        <dbReference type="ChEBI" id="CHEBI:30616"/>
        <dbReference type="ChEBI" id="CHEBI:33019"/>
        <dbReference type="ChEBI" id="CHEBI:57972"/>
        <dbReference type="ChEBI" id="CHEBI:78442"/>
        <dbReference type="ChEBI" id="CHEBI:78497"/>
        <dbReference type="ChEBI" id="CHEBI:456215"/>
        <dbReference type="EC" id="6.1.1.7"/>
    </reaction>
</comment>
<comment type="cofactor">
    <cofactor evidence="1">
        <name>Zn(2+)</name>
        <dbReference type="ChEBI" id="CHEBI:29105"/>
    </cofactor>
    <text evidence="1">Binds 1 zinc ion per subunit.</text>
</comment>
<comment type="subcellular location">
    <subcellularLocation>
        <location evidence="1">Cytoplasm</location>
    </subcellularLocation>
</comment>
<comment type="domain">
    <text evidence="1">Consists of three domains; the N-terminal catalytic domain, the editing domain and the C-terminal C-Ala domain. The editing domain removes incorrectly charged amino acids, while the C-Ala domain, along with tRNA(Ala), serves as a bridge to cooperatively bring together the editing and aminoacylation centers thus stimulating deacylation of misacylated tRNAs.</text>
</comment>
<comment type="similarity">
    <text evidence="1">Belongs to the class-II aminoacyl-tRNA synthetase family.</text>
</comment>
<gene>
    <name evidence="1" type="primary">alaS</name>
    <name type="ordered locus">UNCMA_19110</name>
    <name type="ORF">RCIX939</name>
</gene>
<feature type="chain" id="PRO_0000347894" description="Alanine--tRNA ligase">
    <location>
        <begin position="1"/>
        <end position="875"/>
    </location>
</feature>
<feature type="binding site" evidence="1">
    <location>
        <position position="596"/>
    </location>
    <ligand>
        <name>Zn(2+)</name>
        <dbReference type="ChEBI" id="CHEBI:29105"/>
    </ligand>
</feature>
<feature type="binding site" evidence="1">
    <location>
        <position position="600"/>
    </location>
    <ligand>
        <name>Zn(2+)</name>
        <dbReference type="ChEBI" id="CHEBI:29105"/>
    </ligand>
</feature>
<feature type="binding site" evidence="1">
    <location>
        <position position="700"/>
    </location>
    <ligand>
        <name>Zn(2+)</name>
        <dbReference type="ChEBI" id="CHEBI:29105"/>
    </ligand>
</feature>
<feature type="binding site" evidence="1">
    <location>
        <position position="704"/>
    </location>
    <ligand>
        <name>Zn(2+)</name>
        <dbReference type="ChEBI" id="CHEBI:29105"/>
    </ligand>
</feature>
<evidence type="ECO:0000255" key="1">
    <source>
        <dbReference type="HAMAP-Rule" id="MF_00036"/>
    </source>
</evidence>
<protein>
    <recommendedName>
        <fullName evidence="1">Alanine--tRNA ligase</fullName>
        <ecNumber evidence="1">6.1.1.7</ecNumber>
    </recommendedName>
    <alternativeName>
        <fullName evidence="1">Alanyl-tRNA synthetase</fullName>
        <shortName evidence="1">AlaRS</shortName>
    </alternativeName>
</protein>
<accession>Q0W5Q9</accession>
<dbReference type="EC" id="6.1.1.7" evidence="1"/>
<dbReference type="EMBL" id="AM114193">
    <property type="protein sequence ID" value="CAJ36284.1"/>
    <property type="molecule type" value="Genomic_DNA"/>
</dbReference>
<dbReference type="RefSeq" id="WP_012036236.1">
    <property type="nucleotide sequence ID" value="NC_009464.1"/>
</dbReference>
<dbReference type="SMR" id="Q0W5Q9"/>
<dbReference type="STRING" id="351160.RCIX939"/>
<dbReference type="GeneID" id="5145109"/>
<dbReference type="KEGG" id="rci:RCIX939"/>
<dbReference type="PATRIC" id="fig|351160.9.peg.1959"/>
<dbReference type="eggNOG" id="arCOG01255">
    <property type="taxonomic scope" value="Archaea"/>
</dbReference>
<dbReference type="OrthoDB" id="7506at2157"/>
<dbReference type="Proteomes" id="UP000000663">
    <property type="component" value="Chromosome"/>
</dbReference>
<dbReference type="GO" id="GO:0005737">
    <property type="term" value="C:cytoplasm"/>
    <property type="evidence" value="ECO:0007669"/>
    <property type="project" value="UniProtKB-SubCell"/>
</dbReference>
<dbReference type="GO" id="GO:0004813">
    <property type="term" value="F:alanine-tRNA ligase activity"/>
    <property type="evidence" value="ECO:0007669"/>
    <property type="project" value="UniProtKB-UniRule"/>
</dbReference>
<dbReference type="GO" id="GO:0002161">
    <property type="term" value="F:aminoacyl-tRNA deacylase activity"/>
    <property type="evidence" value="ECO:0007669"/>
    <property type="project" value="UniProtKB-ARBA"/>
</dbReference>
<dbReference type="GO" id="GO:0005524">
    <property type="term" value="F:ATP binding"/>
    <property type="evidence" value="ECO:0007669"/>
    <property type="project" value="UniProtKB-UniRule"/>
</dbReference>
<dbReference type="GO" id="GO:0000049">
    <property type="term" value="F:tRNA binding"/>
    <property type="evidence" value="ECO:0007669"/>
    <property type="project" value="UniProtKB-KW"/>
</dbReference>
<dbReference type="GO" id="GO:0008270">
    <property type="term" value="F:zinc ion binding"/>
    <property type="evidence" value="ECO:0007669"/>
    <property type="project" value="UniProtKB-UniRule"/>
</dbReference>
<dbReference type="GO" id="GO:0006419">
    <property type="term" value="P:alanyl-tRNA aminoacylation"/>
    <property type="evidence" value="ECO:0007669"/>
    <property type="project" value="UniProtKB-UniRule"/>
</dbReference>
<dbReference type="FunFam" id="3.30.54.20:FF:000004">
    <property type="entry name" value="Alanine--tRNA ligase"/>
    <property type="match status" value="1"/>
</dbReference>
<dbReference type="FunFam" id="3.30.980.10:FF:000004">
    <property type="entry name" value="Alanine--tRNA ligase, cytoplasmic"/>
    <property type="match status" value="1"/>
</dbReference>
<dbReference type="Gene3D" id="2.40.30.130">
    <property type="match status" value="1"/>
</dbReference>
<dbReference type="Gene3D" id="3.30.54.20">
    <property type="match status" value="1"/>
</dbReference>
<dbReference type="Gene3D" id="6.10.250.550">
    <property type="match status" value="1"/>
</dbReference>
<dbReference type="Gene3D" id="3.30.930.10">
    <property type="entry name" value="Bira Bifunctional Protein, Domain 2"/>
    <property type="match status" value="1"/>
</dbReference>
<dbReference type="Gene3D" id="3.30.980.10">
    <property type="entry name" value="Threonyl-trna Synthetase, Chain A, domain 2"/>
    <property type="match status" value="1"/>
</dbReference>
<dbReference type="HAMAP" id="MF_00036_A">
    <property type="entry name" value="Ala_tRNA_synth_A"/>
    <property type="match status" value="1"/>
</dbReference>
<dbReference type="InterPro" id="IPR045864">
    <property type="entry name" value="aa-tRNA-synth_II/BPL/LPL"/>
</dbReference>
<dbReference type="InterPro" id="IPR002318">
    <property type="entry name" value="Ala-tRNA-lgiase_IIc"/>
</dbReference>
<dbReference type="InterPro" id="IPR018162">
    <property type="entry name" value="Ala-tRNA-ligase_IIc_anticod-bd"/>
</dbReference>
<dbReference type="InterPro" id="IPR018165">
    <property type="entry name" value="Ala-tRNA-synth_IIc_core"/>
</dbReference>
<dbReference type="InterPro" id="IPR018164">
    <property type="entry name" value="Ala-tRNA-synth_IIc_N"/>
</dbReference>
<dbReference type="InterPro" id="IPR022429">
    <property type="entry name" value="Ala-tRNA_lgiase_arc"/>
</dbReference>
<dbReference type="InterPro" id="IPR050058">
    <property type="entry name" value="Ala-tRNA_ligase"/>
</dbReference>
<dbReference type="InterPro" id="IPR018163">
    <property type="entry name" value="Thr/Ala-tRNA-synth_IIc_edit"/>
</dbReference>
<dbReference type="InterPro" id="IPR009000">
    <property type="entry name" value="Transl_B-barrel_sf"/>
</dbReference>
<dbReference type="InterPro" id="IPR012947">
    <property type="entry name" value="tRNA_SAD"/>
</dbReference>
<dbReference type="NCBIfam" id="TIGR03683">
    <property type="entry name" value="A-tRNA_syn_arch"/>
    <property type="match status" value="1"/>
</dbReference>
<dbReference type="NCBIfam" id="TIGR00344">
    <property type="entry name" value="alaS"/>
    <property type="match status" value="1"/>
</dbReference>
<dbReference type="PANTHER" id="PTHR11777:SF9">
    <property type="entry name" value="ALANINE--TRNA LIGASE, CYTOPLASMIC"/>
    <property type="match status" value="1"/>
</dbReference>
<dbReference type="PANTHER" id="PTHR11777">
    <property type="entry name" value="ALANYL-TRNA SYNTHETASE"/>
    <property type="match status" value="1"/>
</dbReference>
<dbReference type="Pfam" id="PF01411">
    <property type="entry name" value="tRNA-synt_2c"/>
    <property type="match status" value="1"/>
</dbReference>
<dbReference type="Pfam" id="PF07973">
    <property type="entry name" value="tRNA_SAD"/>
    <property type="match status" value="1"/>
</dbReference>
<dbReference type="PRINTS" id="PR00980">
    <property type="entry name" value="TRNASYNTHALA"/>
</dbReference>
<dbReference type="SMART" id="SM00863">
    <property type="entry name" value="tRNA_SAD"/>
    <property type="match status" value="1"/>
</dbReference>
<dbReference type="SUPFAM" id="SSF55681">
    <property type="entry name" value="Class II aaRS and biotin synthetases"/>
    <property type="match status" value="1"/>
</dbReference>
<dbReference type="SUPFAM" id="SSF101353">
    <property type="entry name" value="Putative anticodon-binding domain of alanyl-tRNA synthetase (AlaRS)"/>
    <property type="match status" value="1"/>
</dbReference>
<dbReference type="SUPFAM" id="SSF55186">
    <property type="entry name" value="ThrRS/AlaRS common domain"/>
    <property type="match status" value="1"/>
</dbReference>
<dbReference type="SUPFAM" id="SSF50447">
    <property type="entry name" value="Translation proteins"/>
    <property type="match status" value="1"/>
</dbReference>
<dbReference type="PROSITE" id="PS50860">
    <property type="entry name" value="AA_TRNA_LIGASE_II_ALA"/>
    <property type="match status" value="1"/>
</dbReference>
<name>SYA_METAR</name>